<feature type="signal peptide" evidence="1">
    <location>
        <begin position="1"/>
        <end position="16"/>
    </location>
</feature>
<feature type="chain" id="PRO_0000440424" description="Hemagglutinin" evidence="1">
    <location>
        <begin position="17"/>
        <end position="565"/>
    </location>
</feature>
<feature type="chain" id="PRO_0000038965" description="Hemagglutinin HA1 chain">
    <location>
        <begin position="17"/>
        <end position="343"/>
    </location>
</feature>
<feature type="chain" id="PRO_0000038966" description="Hemagglutinin HA2 chain" evidence="1">
    <location>
        <begin position="345"/>
        <end position="565"/>
    </location>
</feature>
<feature type="topological domain" description="Extracellular" evidence="1">
    <location>
        <begin position="17"/>
        <end position="529"/>
    </location>
</feature>
<feature type="transmembrane region" description="Helical" evidence="1">
    <location>
        <begin position="530"/>
        <end position="550"/>
    </location>
</feature>
<feature type="topological domain" description="Cytoplasmic" evidence="1">
    <location>
        <begin position="551"/>
        <end position="565"/>
    </location>
</feature>
<feature type="site" description="Cleavage; by host" evidence="1">
    <location>
        <begin position="344"/>
        <end position="345"/>
    </location>
</feature>
<feature type="lipid moiety-binding region" description="S-palmitoyl cysteine; by host" evidence="1">
    <location>
        <position position="554"/>
    </location>
</feature>
<feature type="lipid moiety-binding region" description="S-palmitoyl cysteine; by host" evidence="1">
    <location>
        <position position="561"/>
    </location>
</feature>
<feature type="lipid moiety-binding region" description="S-palmitoyl cysteine; by host" evidence="1">
    <location>
        <position position="564"/>
    </location>
</feature>
<feature type="glycosylation site" description="N-linked (GlcNAc...) asparagine; by host" evidence="1">
    <location>
        <position position="23"/>
    </location>
</feature>
<feature type="glycosylation site" description="N-linked (GlcNAc...) asparagine; by host" evidence="1">
    <location>
        <position position="37"/>
    </location>
</feature>
<feature type="glycosylation site" description="N-linked (GlcNAc...) asparagine; by host" evidence="1">
    <location>
        <position position="53"/>
    </location>
</feature>
<feature type="glycosylation site" description="N-linked (GlcNAc...) asparagine; by host" evidence="1">
    <location>
        <position position="78"/>
    </location>
</feature>
<feature type="glycosylation site" description="N-linked (GlcNAc...) asparagine; by host" evidence="1">
    <location>
        <position position="180"/>
    </location>
</feature>
<feature type="glycosylation site" description="N-linked (GlcNAc...) asparagine; by host" evidence="1">
    <location>
        <position position="300"/>
    </location>
</feature>
<feature type="glycosylation site" description="N-linked (GlcNAc...) asparagine; by host" evidence="1">
    <location>
        <position position="498"/>
    </location>
</feature>
<feature type="disulfide bond" description="Interchain (between HA1 and HA2 chains)" evidence="1">
    <location>
        <begin position="29"/>
        <end position="481"/>
    </location>
</feature>
<feature type="disulfide bond" evidence="1">
    <location>
        <begin position="67"/>
        <end position="292"/>
    </location>
</feature>
<feature type="disulfide bond" evidence="1">
    <location>
        <begin position="79"/>
        <end position="91"/>
    </location>
</feature>
<feature type="disulfide bond" evidence="1">
    <location>
        <begin position="112"/>
        <end position="154"/>
    </location>
</feature>
<feature type="disulfide bond" evidence="1">
    <location>
        <begin position="296"/>
        <end position="320"/>
    </location>
</feature>
<feature type="disulfide bond" evidence="1">
    <location>
        <begin position="488"/>
        <end position="492"/>
    </location>
</feature>
<organism>
    <name type="scientific">Influenza A virus (strain A/Equine/Algiers/1972 H3N8)</name>
    <dbReference type="NCBI Taxonomy" id="387214"/>
    <lineage>
        <taxon>Viruses</taxon>
        <taxon>Riboviria</taxon>
        <taxon>Orthornavirae</taxon>
        <taxon>Negarnaviricota</taxon>
        <taxon>Polyploviricotina</taxon>
        <taxon>Insthoviricetes</taxon>
        <taxon>Articulavirales</taxon>
        <taxon>Orthomyxoviridae</taxon>
        <taxon>Alphainfluenzavirus</taxon>
        <taxon>Alphainfluenzavirus influenzae</taxon>
        <taxon>Influenza A virus</taxon>
    </lineage>
</organism>
<keyword id="KW-1167">Clathrin- and caveolin-independent endocytosis of virus by host</keyword>
<keyword id="KW-1165">Clathrin-mediated endocytosis of virus by host</keyword>
<keyword id="KW-1015">Disulfide bond</keyword>
<keyword id="KW-1170">Fusion of virus membrane with host endosomal membrane</keyword>
<keyword id="KW-1168">Fusion of virus membrane with host membrane</keyword>
<keyword id="KW-0325">Glycoprotein</keyword>
<keyword id="KW-0348">Hemagglutinin</keyword>
<keyword id="KW-1032">Host cell membrane</keyword>
<keyword id="KW-1043">Host membrane</keyword>
<keyword id="KW-0945">Host-virus interaction</keyword>
<keyword id="KW-0449">Lipoprotein</keyword>
<keyword id="KW-0472">Membrane</keyword>
<keyword id="KW-0564">Palmitate</keyword>
<keyword id="KW-0732">Signal</keyword>
<keyword id="KW-0812">Transmembrane</keyword>
<keyword id="KW-1133">Transmembrane helix</keyword>
<keyword id="KW-1161">Viral attachment to host cell</keyword>
<keyword id="KW-0261">Viral envelope protein</keyword>
<keyword id="KW-1162">Viral penetration into host cytoplasm</keyword>
<keyword id="KW-0946">Virion</keyword>
<keyword id="KW-1164">Virus endocytosis by host</keyword>
<keyword id="KW-1160">Virus entry into host cell</keyword>
<name>HEMA_I72A0</name>
<proteinExistence type="inferred from homology"/>
<organismHost>
    <name type="scientific">Aves</name>
    <dbReference type="NCBI Taxonomy" id="8782"/>
</organismHost>
<organismHost>
    <name type="scientific">Equus caballus</name>
    <name type="common">Horse</name>
    <dbReference type="NCBI Taxonomy" id="9796"/>
</organismHost>
<evidence type="ECO:0000255" key="1">
    <source>
        <dbReference type="HAMAP-Rule" id="MF_04072"/>
    </source>
</evidence>
<evidence type="ECO:0000305" key="2"/>
<gene>
    <name evidence="1" type="primary">HA</name>
</gene>
<dbReference type="EMBL" id="M24721">
    <property type="protein sequence ID" value="AAA43100.1"/>
    <property type="status" value="ALT_SEQ"/>
    <property type="molecule type" value="Genomic_RNA"/>
</dbReference>
<dbReference type="SMR" id="P16994"/>
<dbReference type="GlyCosmos" id="P16994">
    <property type="glycosylation" value="7 sites, No reported glycans"/>
</dbReference>
<dbReference type="GO" id="GO:0020002">
    <property type="term" value="C:host cell plasma membrane"/>
    <property type="evidence" value="ECO:0007669"/>
    <property type="project" value="UniProtKB-SubCell"/>
</dbReference>
<dbReference type="GO" id="GO:0016020">
    <property type="term" value="C:membrane"/>
    <property type="evidence" value="ECO:0007669"/>
    <property type="project" value="UniProtKB-UniRule"/>
</dbReference>
<dbReference type="GO" id="GO:0019031">
    <property type="term" value="C:viral envelope"/>
    <property type="evidence" value="ECO:0007669"/>
    <property type="project" value="UniProtKB-UniRule"/>
</dbReference>
<dbReference type="GO" id="GO:0055036">
    <property type="term" value="C:virion membrane"/>
    <property type="evidence" value="ECO:0007669"/>
    <property type="project" value="UniProtKB-SubCell"/>
</dbReference>
<dbReference type="GO" id="GO:0046789">
    <property type="term" value="F:host cell surface receptor binding"/>
    <property type="evidence" value="ECO:0007669"/>
    <property type="project" value="UniProtKB-UniRule"/>
</dbReference>
<dbReference type="GO" id="GO:0075512">
    <property type="term" value="P:clathrin-dependent endocytosis of virus by host cell"/>
    <property type="evidence" value="ECO:0007669"/>
    <property type="project" value="UniProtKB-UniRule"/>
</dbReference>
<dbReference type="GO" id="GO:0039654">
    <property type="term" value="P:fusion of virus membrane with host endosome membrane"/>
    <property type="evidence" value="ECO:0007669"/>
    <property type="project" value="UniProtKB-UniRule"/>
</dbReference>
<dbReference type="GO" id="GO:0019064">
    <property type="term" value="P:fusion of virus membrane with host plasma membrane"/>
    <property type="evidence" value="ECO:0007669"/>
    <property type="project" value="InterPro"/>
</dbReference>
<dbReference type="GO" id="GO:0046761">
    <property type="term" value="P:viral budding from plasma membrane"/>
    <property type="evidence" value="ECO:0007669"/>
    <property type="project" value="UniProtKB-UniRule"/>
</dbReference>
<dbReference type="GO" id="GO:0019062">
    <property type="term" value="P:virion attachment to host cell"/>
    <property type="evidence" value="ECO:0007669"/>
    <property type="project" value="UniProtKB-KW"/>
</dbReference>
<dbReference type="FunFam" id="3.90.20.10:FF:000001">
    <property type="entry name" value="Hemagglutinin"/>
    <property type="match status" value="1"/>
</dbReference>
<dbReference type="FunFam" id="3.90.209.20:FF:000001">
    <property type="entry name" value="Hemagglutinin"/>
    <property type="match status" value="1"/>
</dbReference>
<dbReference type="Gene3D" id="3.90.20.10">
    <property type="match status" value="1"/>
</dbReference>
<dbReference type="Gene3D" id="3.90.209.20">
    <property type="match status" value="1"/>
</dbReference>
<dbReference type="HAMAP" id="MF_04072">
    <property type="entry name" value="INFV_HEMA"/>
    <property type="match status" value="1"/>
</dbReference>
<dbReference type="InterPro" id="IPR008980">
    <property type="entry name" value="Capsid_hemagglutn"/>
</dbReference>
<dbReference type="InterPro" id="IPR013828">
    <property type="entry name" value="Hemagglutn_HA1_a/b_dom_sf"/>
</dbReference>
<dbReference type="InterPro" id="IPR000149">
    <property type="entry name" value="Hemagglutn_influenz_A"/>
</dbReference>
<dbReference type="InterPro" id="IPR001364">
    <property type="entry name" value="Hemagglutn_influenz_A/B"/>
</dbReference>
<dbReference type="Pfam" id="PF00509">
    <property type="entry name" value="Hemagglutinin"/>
    <property type="match status" value="1"/>
</dbReference>
<dbReference type="PRINTS" id="PR00330">
    <property type="entry name" value="HEMAGGLUTN1"/>
</dbReference>
<dbReference type="PRINTS" id="PR00329">
    <property type="entry name" value="HEMAGGLUTN12"/>
</dbReference>
<dbReference type="SUPFAM" id="SSF58064">
    <property type="entry name" value="Influenza hemagglutinin (stalk)"/>
    <property type="match status" value="1"/>
</dbReference>
<dbReference type="SUPFAM" id="SSF49818">
    <property type="entry name" value="Viral protein domain"/>
    <property type="match status" value="1"/>
</dbReference>
<accession>P16994</accession>
<accession>Q83990</accession>
<accession>Q83991</accession>
<reference key="1">
    <citation type="journal article" date="1989" name="Virology">
        <title>Evolution of the hemagglutinin of equine H3 influenza viruses.</title>
        <authorList>
            <person name="Kawaoka Y."/>
            <person name="Bean W.J."/>
            <person name="Webster R.G."/>
        </authorList>
    </citation>
    <scope>NUCLEOTIDE SEQUENCE [GENOMIC RNA]</scope>
</reference>
<protein>
    <recommendedName>
        <fullName evidence="1">Hemagglutinin</fullName>
    </recommendedName>
    <component>
        <recommendedName>
            <fullName evidence="1">Hemagglutinin HA1 chain</fullName>
        </recommendedName>
    </component>
    <component>
        <recommendedName>
            <fullName evidence="1">Hemagglutinin HA2 chain</fullName>
        </recommendedName>
    </component>
</protein>
<comment type="function">
    <text>Binds to sialic acid-containing receptors on the cell surface, bringing about the attachment of the virus particle to the cell. This attachment induces virion internalization of about two third of the virus particles through clathrin-dependent endocytosis and about one third through a clathrin- and caveolin-independent pathway. Plays a major role in the determination of host range restriction and virulence. Class I viral fusion protein. Responsible for penetration of the virus into the cell cytoplasm by mediating the fusion of the membrane of the endocytosed virus particle with the endosomal membrane. Low pH in endosomes induces an irreversible conformational change in HA2, releasing the fusion hydrophobic peptide. Several trimers are required to form a competent fusion pore.</text>
</comment>
<comment type="function">
    <text evidence="1">Binds to sialic acid-containing receptors on the cell surface, bringing about the attachment of the virus particle to the cell. This attachment induces virion internalization either through clathrin-dependent endocytosis or through clathrin- and caveolin-independent pathway. Plays a major role in the determination of host range restriction and virulence. Class I viral fusion protein. Responsible for penetration of the virus into the cell cytoplasm by mediating the fusion of the membrane of the endocytosed virus particle with the endosomal membrane. Low pH in endosomes induces an irreversible conformational change in HA2, releasing the fusion hydrophobic peptide. Several trimers are required to form a competent fusion pore.</text>
</comment>
<comment type="subunit">
    <text evidence="1">Homotrimer of disulfide-linked HA1-HA2.</text>
</comment>
<comment type="subcellular location">
    <subcellularLocation>
        <location evidence="1">Virion membrane</location>
        <topology evidence="1">Single-pass type I membrane protein</topology>
    </subcellularLocation>
    <subcellularLocation>
        <location evidence="1">Host apical cell membrane</location>
        <topology evidence="1">Single-pass type I membrane protein</topology>
    </subcellularLocation>
    <text evidence="1">Targeted to the apical plasma membrane in epithelial polarized cells through a signal present in the transmembrane domain. Associated with glycosphingolipid- and cholesterol-enriched detergent-resistant lipid rafts.</text>
</comment>
<comment type="PTM">
    <text evidence="1">Palmitoylated.</text>
</comment>
<comment type="PTM">
    <text evidence="1">In natural infection, inactive HA is matured into HA1 and HA2 outside the cell by one or more trypsin-like, arginine-specific endoprotease secreted by the bronchial epithelial cells. One identified protease that may be involved in this process is secreted in lungs by club cells.</text>
</comment>
<comment type="miscellaneous">
    <text>Major glycoprotein, comprises over 80% of the envelope proteins present in virus particle.</text>
</comment>
<comment type="miscellaneous">
    <text>The extent of infection into host organism is determined by HA. Influenza viruses bud from the apical surface of polarized epithelial cells (e.g. bronchial epithelial cells) into lumen of lungs and are therefore usually pneumotropic. The reason is that HA is cleaved by tryptase clara which is restricted to lungs. However, HAs of H5 and H7 pantropic avian viruses subtypes can be cleaved by furin and subtilisin-type enzymes, allowing the virus to grow in other organs than lungs.</text>
</comment>
<comment type="miscellaneous">
    <text evidence="2">The influenza A genome consist of 8 RNA segments. Genetic variation of hemagglutinin and/or neuraminidase genes results in the emergence of new influenza strains. The mechanism of variation can be the result of point mutations or the result of genetic reassortment between segments of two different strains.</text>
</comment>
<comment type="similarity">
    <text evidence="1">Belongs to the influenza viruses hemagglutinin family.</text>
</comment>
<sequence length="565" mass="63831">MKTTIILILLIHWVHSQIPISDNNTATLCLGHHAVANGTLVKTLTDDQTEVTNATELVQSTSTGKICNNPYRVLDGKNCTLIDAMLGDPHCDVFQYENWDLFVERSSAFSNCYPYDVPDYASLRSIVASSGTLEFMAEGFTWTGVTQNGRSSSCRRGSADSFFSRLNWLTKSESSYSTLNVTMPNNDNFDKLYIWGIHHPSTNNEQTKLYVQASGRVTVSTKRSQQTILPNIGSRPWVRGQSGRISIYWTIVKPGDVLVINSNGNLIAPRGYFKMRAGKSSIMRSDAPIDTCVFECITPNGSIPNDKPFQNVNKITYGKCPKYVKQSTLKLATGMRNVPEKRLRGIFGAIAGFIENGWEGMVDGWYGFRHQNSEGTGQAGDLKSTQAAIDQINGKLNRVIEKTNEKFHQIEKEFSEVEGRIQDLEKYVEDTKIDLWSYNAELLVALENQHTIDLTDAEMNKLFERTRRQLRENAEDMGNGCFKIYHKCDNACIESIRNGTYDHDIYRDEALNNRFQIKSVELKSGYKDWILWISFAISCFLICVVLLGFIMWACQKGNIRCNICI</sequence>